<protein>
    <recommendedName>
        <fullName evidence="1">Pyrimidine monooxygenase RutA</fullName>
        <ecNumber evidence="1">1.14.99.46</ecNumber>
    </recommendedName>
</protein>
<sequence length="331" mass="36907">MQTSHYAAEKDMQDAAPRLTFTLRDEERLMMKIGVFVPIGNNGWLISTHAPQYMPTFELNKAIVQKAEHYHFDFALSMIKLRGFGGKTEFWDHNLESFTLMAGLAAVTSRIQIYATAATLTLPPAIVARMAATIDSISGGRFGVNLVTGWQKPEYEQMGIWPGDDYFSRRYDYLTEYVQVLRDLWGTGKSDFKGDFFTMNDCRVSPQPSVPMKVICAGQSDAGMAFSAQYADFNFCFGKGVNTPTAFAPTAARMKQAAEQTGRDVGSYVLFMVIADETDDAARTKWEHYKAGADEEALSWLTEQSQKDTRSGTDTNVRQMADPTSASAFNH</sequence>
<accession>B7NLB4</accession>
<evidence type="ECO:0000255" key="1">
    <source>
        <dbReference type="HAMAP-Rule" id="MF_01699"/>
    </source>
</evidence>
<evidence type="ECO:0000256" key="2">
    <source>
        <dbReference type="SAM" id="MobiDB-lite"/>
    </source>
</evidence>
<name>RUTA_ECO7I</name>
<dbReference type="EC" id="1.14.99.46" evidence="1"/>
<dbReference type="EMBL" id="CU928164">
    <property type="protein sequence ID" value="CAR18270.1"/>
    <property type="molecule type" value="Genomic_DNA"/>
</dbReference>
<dbReference type="RefSeq" id="YP_002408106.1">
    <property type="nucleotide sequence ID" value="NC_011750.1"/>
</dbReference>
<dbReference type="SMR" id="B7NLB4"/>
<dbReference type="STRING" id="585057.ECIAI39_2143"/>
<dbReference type="KEGG" id="ect:ECIAI39_2143"/>
<dbReference type="PATRIC" id="fig|585057.6.peg.2231"/>
<dbReference type="HOGENOM" id="CLU_027853_1_1_6"/>
<dbReference type="Proteomes" id="UP000000749">
    <property type="component" value="Chromosome"/>
</dbReference>
<dbReference type="GO" id="GO:0008726">
    <property type="term" value="F:alkanesulfonate monooxygenase activity"/>
    <property type="evidence" value="ECO:0007669"/>
    <property type="project" value="TreeGrafter"/>
</dbReference>
<dbReference type="GO" id="GO:0052614">
    <property type="term" value="F:uracil oxygenase activity"/>
    <property type="evidence" value="ECO:0007669"/>
    <property type="project" value="UniProtKB-EC"/>
</dbReference>
<dbReference type="GO" id="GO:0046306">
    <property type="term" value="P:alkanesulfonate catabolic process"/>
    <property type="evidence" value="ECO:0007669"/>
    <property type="project" value="TreeGrafter"/>
</dbReference>
<dbReference type="GO" id="GO:0019740">
    <property type="term" value="P:nitrogen utilization"/>
    <property type="evidence" value="ECO:0007669"/>
    <property type="project" value="UniProtKB-UniRule"/>
</dbReference>
<dbReference type="GO" id="GO:0006212">
    <property type="term" value="P:uracil catabolic process"/>
    <property type="evidence" value="ECO:0007669"/>
    <property type="project" value="UniProtKB-UniRule"/>
</dbReference>
<dbReference type="CDD" id="cd01094">
    <property type="entry name" value="Alkanesulfonate_monoxygenase"/>
    <property type="match status" value="1"/>
</dbReference>
<dbReference type="Gene3D" id="3.20.20.30">
    <property type="entry name" value="Luciferase-like domain"/>
    <property type="match status" value="1"/>
</dbReference>
<dbReference type="HAMAP" id="MF_01699">
    <property type="entry name" value="RutA"/>
    <property type="match status" value="1"/>
</dbReference>
<dbReference type="InterPro" id="IPR011251">
    <property type="entry name" value="Luciferase-like_dom"/>
</dbReference>
<dbReference type="InterPro" id="IPR036661">
    <property type="entry name" value="Luciferase-like_sf"/>
</dbReference>
<dbReference type="InterPro" id="IPR019914">
    <property type="entry name" value="Pyrimidine_monooxygenase_RutA"/>
</dbReference>
<dbReference type="InterPro" id="IPR050172">
    <property type="entry name" value="SsuD_RutA_monooxygenase"/>
</dbReference>
<dbReference type="NCBIfam" id="TIGR03612">
    <property type="entry name" value="RutA"/>
    <property type="match status" value="1"/>
</dbReference>
<dbReference type="PANTHER" id="PTHR42847">
    <property type="entry name" value="ALKANESULFONATE MONOOXYGENASE"/>
    <property type="match status" value="1"/>
</dbReference>
<dbReference type="PANTHER" id="PTHR42847:SF4">
    <property type="entry name" value="ALKANESULFONATE MONOOXYGENASE-RELATED"/>
    <property type="match status" value="1"/>
</dbReference>
<dbReference type="Pfam" id="PF00296">
    <property type="entry name" value="Bac_luciferase"/>
    <property type="match status" value="1"/>
</dbReference>
<dbReference type="SUPFAM" id="SSF51679">
    <property type="entry name" value="Bacterial luciferase-like"/>
    <property type="match status" value="1"/>
</dbReference>
<organism>
    <name type="scientific">Escherichia coli O7:K1 (strain IAI39 / ExPEC)</name>
    <dbReference type="NCBI Taxonomy" id="585057"/>
    <lineage>
        <taxon>Bacteria</taxon>
        <taxon>Pseudomonadati</taxon>
        <taxon>Pseudomonadota</taxon>
        <taxon>Gammaproteobacteria</taxon>
        <taxon>Enterobacterales</taxon>
        <taxon>Enterobacteriaceae</taxon>
        <taxon>Escherichia</taxon>
    </lineage>
</organism>
<keyword id="KW-0285">Flavoprotein</keyword>
<keyword id="KW-0288">FMN</keyword>
<keyword id="KW-0503">Monooxygenase</keyword>
<keyword id="KW-0521">NADP</keyword>
<keyword id="KW-0560">Oxidoreductase</keyword>
<reference key="1">
    <citation type="journal article" date="2009" name="PLoS Genet.">
        <title>Organised genome dynamics in the Escherichia coli species results in highly diverse adaptive paths.</title>
        <authorList>
            <person name="Touchon M."/>
            <person name="Hoede C."/>
            <person name="Tenaillon O."/>
            <person name="Barbe V."/>
            <person name="Baeriswyl S."/>
            <person name="Bidet P."/>
            <person name="Bingen E."/>
            <person name="Bonacorsi S."/>
            <person name="Bouchier C."/>
            <person name="Bouvet O."/>
            <person name="Calteau A."/>
            <person name="Chiapello H."/>
            <person name="Clermont O."/>
            <person name="Cruveiller S."/>
            <person name="Danchin A."/>
            <person name="Diard M."/>
            <person name="Dossat C."/>
            <person name="Karoui M.E."/>
            <person name="Frapy E."/>
            <person name="Garry L."/>
            <person name="Ghigo J.M."/>
            <person name="Gilles A.M."/>
            <person name="Johnson J."/>
            <person name="Le Bouguenec C."/>
            <person name="Lescat M."/>
            <person name="Mangenot S."/>
            <person name="Martinez-Jehanne V."/>
            <person name="Matic I."/>
            <person name="Nassif X."/>
            <person name="Oztas S."/>
            <person name="Petit M.A."/>
            <person name="Pichon C."/>
            <person name="Rouy Z."/>
            <person name="Ruf C.S."/>
            <person name="Schneider D."/>
            <person name="Tourret J."/>
            <person name="Vacherie B."/>
            <person name="Vallenet D."/>
            <person name="Medigue C."/>
            <person name="Rocha E.P.C."/>
            <person name="Denamur E."/>
        </authorList>
    </citation>
    <scope>NUCLEOTIDE SEQUENCE [LARGE SCALE GENOMIC DNA]</scope>
    <source>
        <strain>IAI39 / ExPEC</strain>
    </source>
</reference>
<feature type="chain" id="PRO_0000402620" description="Pyrimidine monooxygenase RutA">
    <location>
        <begin position="1"/>
        <end position="331"/>
    </location>
</feature>
<feature type="region of interest" description="Disordered" evidence="2">
    <location>
        <begin position="300"/>
        <end position="331"/>
    </location>
</feature>
<feature type="compositionally biased region" description="Polar residues" evidence="2">
    <location>
        <begin position="312"/>
        <end position="331"/>
    </location>
</feature>
<feature type="binding site" evidence="1">
    <location>
        <begin position="79"/>
        <end position="80"/>
    </location>
    <ligand>
        <name>FMN</name>
        <dbReference type="ChEBI" id="CHEBI:58210"/>
    </ligand>
</feature>
<feature type="binding site" evidence="1">
    <location>
        <position position="145"/>
    </location>
    <ligand>
        <name>FMN</name>
        <dbReference type="ChEBI" id="CHEBI:58210"/>
    </ligand>
</feature>
<feature type="binding site" evidence="1">
    <location>
        <position position="154"/>
    </location>
    <ligand>
        <name>FMN</name>
        <dbReference type="ChEBI" id="CHEBI:58210"/>
    </ligand>
</feature>
<feature type="binding site" evidence="1">
    <location>
        <begin position="170"/>
        <end position="171"/>
    </location>
    <ligand>
        <name>FMN</name>
        <dbReference type="ChEBI" id="CHEBI:58210"/>
    </ligand>
</feature>
<feature type="binding site" evidence="1">
    <location>
        <position position="220"/>
    </location>
    <ligand>
        <name>FMN</name>
        <dbReference type="ChEBI" id="CHEBI:58210"/>
    </ligand>
</feature>
<gene>
    <name evidence="1" type="primary">rutA</name>
    <name type="ordered locus">ECIAI39_2143</name>
</gene>
<proteinExistence type="inferred from homology"/>
<comment type="function">
    <text evidence="1">Catalyzes the pyrimidine ring opening between N-3 and C-4 by an unusual flavin hydroperoxide-catalyzed mechanism, adding oxygen atoms in the process to yield ureidoacrylate peracid, that immediately reacts with FMN forming ureidoacrylate and FMN-N(5)-oxide. The FMN-N(5)-oxide reacts spontaneously with NADH to produce FMN. Requires the flavin reductase RutF to regenerate FMN in vivo.</text>
</comment>
<comment type="catalytic activity">
    <reaction evidence="1">
        <text>uracil + FMNH2 + NADH + O2 = (Z)-3-ureidoacrylate + FMN + NAD(+) + H2O + H(+)</text>
        <dbReference type="Rhea" id="RHEA:31587"/>
        <dbReference type="ChEBI" id="CHEBI:15377"/>
        <dbReference type="ChEBI" id="CHEBI:15378"/>
        <dbReference type="ChEBI" id="CHEBI:15379"/>
        <dbReference type="ChEBI" id="CHEBI:17568"/>
        <dbReference type="ChEBI" id="CHEBI:57540"/>
        <dbReference type="ChEBI" id="CHEBI:57618"/>
        <dbReference type="ChEBI" id="CHEBI:57945"/>
        <dbReference type="ChEBI" id="CHEBI:58210"/>
        <dbReference type="ChEBI" id="CHEBI:59891"/>
        <dbReference type="EC" id="1.14.99.46"/>
    </reaction>
</comment>
<comment type="catalytic activity">
    <reaction evidence="1">
        <text>thymine + FMNH2 + NADH + O2 = (Z)-2-methylureidoacrylate + FMN + NAD(+) + H2O + H(+)</text>
        <dbReference type="Rhea" id="RHEA:31599"/>
        <dbReference type="ChEBI" id="CHEBI:15377"/>
        <dbReference type="ChEBI" id="CHEBI:15378"/>
        <dbReference type="ChEBI" id="CHEBI:15379"/>
        <dbReference type="ChEBI" id="CHEBI:17821"/>
        <dbReference type="ChEBI" id="CHEBI:57540"/>
        <dbReference type="ChEBI" id="CHEBI:57618"/>
        <dbReference type="ChEBI" id="CHEBI:57945"/>
        <dbReference type="ChEBI" id="CHEBI:58210"/>
        <dbReference type="ChEBI" id="CHEBI:143783"/>
        <dbReference type="EC" id="1.14.99.46"/>
    </reaction>
</comment>
<comment type="induction">
    <text evidence="1">Up-regulated by the nitrogen regulatory protein C (NtrC also called GlnG) and repressed by RutR.</text>
</comment>
<comment type="similarity">
    <text evidence="1">Belongs to the NtaA/SnaA/DszA monooxygenase family. RutA subfamily.</text>
</comment>